<accession>Q9ZW75</accession>
<accession>Q8S8J5</accession>
<reference key="1">
    <citation type="journal article" date="1999" name="Nature">
        <title>Sequence and analysis of chromosome 2 of the plant Arabidopsis thaliana.</title>
        <authorList>
            <person name="Lin X."/>
            <person name="Kaul S."/>
            <person name="Rounsley S.D."/>
            <person name="Shea T.P."/>
            <person name="Benito M.-I."/>
            <person name="Town C.D."/>
            <person name="Fujii C.Y."/>
            <person name="Mason T.M."/>
            <person name="Bowman C.L."/>
            <person name="Barnstead M.E."/>
            <person name="Feldblyum T.V."/>
            <person name="Buell C.R."/>
            <person name="Ketchum K.A."/>
            <person name="Lee J.J."/>
            <person name="Ronning C.M."/>
            <person name="Koo H.L."/>
            <person name="Moffat K.S."/>
            <person name="Cronin L.A."/>
            <person name="Shen M."/>
            <person name="Pai G."/>
            <person name="Van Aken S."/>
            <person name="Umayam L."/>
            <person name="Tallon L.J."/>
            <person name="Gill J.E."/>
            <person name="Adams M.D."/>
            <person name="Carrera A.J."/>
            <person name="Creasy T.H."/>
            <person name="Goodman H.M."/>
            <person name="Somerville C.R."/>
            <person name="Copenhaver G.P."/>
            <person name="Preuss D."/>
            <person name="Nierman W.C."/>
            <person name="White O."/>
            <person name="Eisen J.A."/>
            <person name="Salzberg S.L."/>
            <person name="Fraser C.M."/>
            <person name="Venter J.C."/>
        </authorList>
    </citation>
    <scope>NUCLEOTIDE SEQUENCE [LARGE SCALE GENOMIC DNA]</scope>
    <source>
        <strain>cv. Columbia</strain>
    </source>
</reference>
<reference key="2">
    <citation type="journal article" date="2017" name="Plant J.">
        <title>Araport11: a complete reannotation of the Arabidopsis thaliana reference genome.</title>
        <authorList>
            <person name="Cheng C.Y."/>
            <person name="Krishnakumar V."/>
            <person name="Chan A.P."/>
            <person name="Thibaud-Nissen F."/>
            <person name="Schobel S."/>
            <person name="Town C.D."/>
        </authorList>
    </citation>
    <scope>GENOME REANNOTATION</scope>
    <source>
        <strain>cv. Columbia</strain>
    </source>
</reference>
<reference key="3">
    <citation type="journal article" date="2007" name="Plant J.">
        <title>The TUMOROUS SHOOT DEVELOPMENT2 gene of Arabidopsis encoding a putative methyltransferase is required for cell adhesion and co-ordinated plant development.</title>
        <authorList>
            <person name="Krupkova E."/>
            <person name="Immerzeel P."/>
            <person name="Pauly M."/>
            <person name="Schmulling T."/>
        </authorList>
    </citation>
    <scope>GENE FAMILY</scope>
</reference>
<sequence>MNPSQQHLPKLCPKRLFLFFTPFLLFSLYYILTTIKTITISSQDRHHPPQLHVPSISHYYSLPETSENRSSPPPLLLPPPPSSSSSLSSYFPLCPKNFTNYLPCHDPSTARQYSIERHYRRERHCPDIAQEKFRCLVPKPTGYKTPFPWPESRKYAWFRNVPFKRLAELKKTQNWVRLEGDRFVFPGGGTSFPGGVKDYVDVILSVLPLASGSIRTVLDIGCGVASFGAFLLNYKILTMSIAPRDIHEAQVQFALERGLPAMLGVLSTYKLPYPSRSFDMVHCSRCLVNWTSYDGLYLMEVDRVLRPEGYWVLSGPPVASRVKFKNQKRDSKELQNQMEKLNDVFRRLCWEKIAESYPVVIWRKPSNHLQCRKRLKALKFPGLCSSSDPDAAWYKEMEPCITPLPDVNDTNKTVLKNWPERLNHVPRMKTGSIQGTTIAGFKADTNLWQRRVLYYDTKFKFLSNGKYRNVIDMNAGLGGFAAALIKYPMWVMNVVPFDLKPNTLGVVYDRGLIGTYMNWCEALSTYPRTYDLIHANGVFSLYLDKCDIVDILLEMQRILRPEGAVIIRDRFDVLVKVKAITNQMRWNGTMYPEDNSVFDHGTILIVDNSIK</sequence>
<evidence type="ECO:0000255" key="1"/>
<evidence type="ECO:0000305" key="2"/>
<keyword id="KW-0256">Endoplasmic reticulum</keyword>
<keyword id="KW-0325">Glycoprotein</keyword>
<keyword id="KW-0472">Membrane</keyword>
<keyword id="KW-0489">Methyltransferase</keyword>
<keyword id="KW-1185">Reference proteome</keyword>
<keyword id="KW-0735">Signal-anchor</keyword>
<keyword id="KW-0808">Transferase</keyword>
<keyword id="KW-0812">Transmembrane</keyword>
<keyword id="KW-1133">Transmembrane helix</keyword>
<feature type="chain" id="PRO_0000393259" description="Probable methyltransferase PMT19">
    <location>
        <begin position="1"/>
        <end position="611"/>
    </location>
</feature>
<feature type="topological domain" description="Cytoplasmic" evidence="1">
    <location>
        <begin position="1"/>
        <end position="15"/>
    </location>
</feature>
<feature type="transmembrane region" description="Helical; Signal-anchor for type II membrane protein" evidence="1">
    <location>
        <begin position="16"/>
        <end position="36"/>
    </location>
</feature>
<feature type="topological domain" description="Lumenal" evidence="1">
    <location>
        <begin position="37"/>
        <end position="611"/>
    </location>
</feature>
<feature type="glycosylation site" description="N-linked (GlcNAc...) asparagine" evidence="1">
    <location>
        <position position="68"/>
    </location>
</feature>
<feature type="glycosylation site" description="N-linked (GlcNAc...) asparagine" evidence="1">
    <location>
        <position position="97"/>
    </location>
</feature>
<feature type="glycosylation site" description="N-linked (GlcNAc...) asparagine" evidence="1">
    <location>
        <position position="289"/>
    </location>
</feature>
<feature type="glycosylation site" description="N-linked (GlcNAc...) asparagine" evidence="1">
    <location>
        <position position="408"/>
    </location>
</feature>
<feature type="glycosylation site" description="N-linked (GlcNAc...) asparagine" evidence="1">
    <location>
        <position position="411"/>
    </location>
</feature>
<feature type="glycosylation site" description="N-linked (GlcNAc...) asparagine" evidence="1">
    <location>
        <position position="587"/>
    </location>
</feature>
<organism>
    <name type="scientific">Arabidopsis thaliana</name>
    <name type="common">Mouse-ear cress</name>
    <dbReference type="NCBI Taxonomy" id="3702"/>
    <lineage>
        <taxon>Eukaryota</taxon>
        <taxon>Viridiplantae</taxon>
        <taxon>Streptophyta</taxon>
        <taxon>Embryophyta</taxon>
        <taxon>Tracheophyta</taxon>
        <taxon>Spermatophyta</taxon>
        <taxon>Magnoliopsida</taxon>
        <taxon>eudicotyledons</taxon>
        <taxon>Gunneridae</taxon>
        <taxon>Pentapetalae</taxon>
        <taxon>rosids</taxon>
        <taxon>malvids</taxon>
        <taxon>Brassicales</taxon>
        <taxon>Brassicaceae</taxon>
        <taxon>Camelineae</taxon>
        <taxon>Arabidopsis</taxon>
    </lineage>
</organism>
<comment type="subcellular location">
    <subcellularLocation>
        <location evidence="2">Endoplasmic reticulum membrane</location>
        <topology evidence="2">Single-pass type II membrane protein</topology>
    </subcellularLocation>
</comment>
<comment type="similarity">
    <text evidence="2">Belongs to the methyltransferase superfamily.</text>
</comment>
<comment type="sequence caution" evidence="2">
    <conflict type="erroneous gene model prediction">
        <sequence resource="EMBL-CDS" id="AAM15161"/>
    </conflict>
</comment>
<protein>
    <recommendedName>
        <fullName>Probable methyltransferase PMT19</fullName>
        <ecNumber>2.1.1.-</ecNumber>
    </recommendedName>
</protein>
<name>PMTJ_ARATH</name>
<proteinExistence type="inferred from homology"/>
<gene>
    <name type="ordered locus">At2g43200</name>
    <name type="ORF">F14B2.14</name>
</gene>
<dbReference type="EC" id="2.1.1.-"/>
<dbReference type="EMBL" id="AC004450">
    <property type="protein sequence ID" value="AAC64309.1"/>
    <property type="molecule type" value="Genomic_DNA"/>
</dbReference>
<dbReference type="EMBL" id="AC006224">
    <property type="protein sequence ID" value="AAM15161.1"/>
    <property type="status" value="ALT_SEQ"/>
    <property type="molecule type" value="Genomic_DNA"/>
</dbReference>
<dbReference type="EMBL" id="CP002685">
    <property type="protein sequence ID" value="AEC10228.1"/>
    <property type="molecule type" value="Genomic_DNA"/>
</dbReference>
<dbReference type="EMBL" id="CP002685">
    <property type="protein sequence ID" value="ANM61303.1"/>
    <property type="molecule type" value="Genomic_DNA"/>
</dbReference>
<dbReference type="PIR" id="C84863">
    <property type="entry name" value="C84863"/>
</dbReference>
<dbReference type="RefSeq" id="NP_001318411.1">
    <property type="nucleotide sequence ID" value="NM_001337020.1"/>
</dbReference>
<dbReference type="RefSeq" id="NP_181849.1">
    <property type="nucleotide sequence ID" value="NM_129882.2"/>
</dbReference>
<dbReference type="STRING" id="3702.Q9ZW75"/>
<dbReference type="GlyGen" id="Q9ZW75">
    <property type="glycosylation" value="6 sites"/>
</dbReference>
<dbReference type="iPTMnet" id="Q9ZW75"/>
<dbReference type="PaxDb" id="3702-AT2G43200.1"/>
<dbReference type="ProteomicsDB" id="234787"/>
<dbReference type="EnsemblPlants" id="AT2G43200.1">
    <property type="protein sequence ID" value="AT2G43200.1"/>
    <property type="gene ID" value="AT2G43200"/>
</dbReference>
<dbReference type="EnsemblPlants" id="AT2G43200.2">
    <property type="protein sequence ID" value="AT2G43200.2"/>
    <property type="gene ID" value="AT2G43200"/>
</dbReference>
<dbReference type="GeneID" id="818921"/>
<dbReference type="Gramene" id="AT2G43200.1">
    <property type="protein sequence ID" value="AT2G43200.1"/>
    <property type="gene ID" value="AT2G43200"/>
</dbReference>
<dbReference type="Gramene" id="AT2G43200.2">
    <property type="protein sequence ID" value="AT2G43200.2"/>
    <property type="gene ID" value="AT2G43200"/>
</dbReference>
<dbReference type="KEGG" id="ath:AT2G43200"/>
<dbReference type="Araport" id="AT2G43200"/>
<dbReference type="TAIR" id="AT2G43200"/>
<dbReference type="eggNOG" id="ENOG502QPN0">
    <property type="taxonomic scope" value="Eukaryota"/>
</dbReference>
<dbReference type="HOGENOM" id="CLU_010485_2_2_1"/>
<dbReference type="InParanoid" id="Q9ZW75"/>
<dbReference type="OMA" id="SNHLQCR"/>
<dbReference type="OrthoDB" id="2013972at2759"/>
<dbReference type="PhylomeDB" id="Q9ZW75"/>
<dbReference type="PRO" id="PR:Q9ZW75"/>
<dbReference type="Proteomes" id="UP000006548">
    <property type="component" value="Chromosome 2"/>
</dbReference>
<dbReference type="ExpressionAtlas" id="Q9ZW75">
    <property type="expression patterns" value="baseline and differential"/>
</dbReference>
<dbReference type="GO" id="GO:0005789">
    <property type="term" value="C:endoplasmic reticulum membrane"/>
    <property type="evidence" value="ECO:0007669"/>
    <property type="project" value="UniProtKB-SubCell"/>
</dbReference>
<dbReference type="GO" id="GO:0008168">
    <property type="term" value="F:methyltransferase activity"/>
    <property type="evidence" value="ECO:0007669"/>
    <property type="project" value="UniProtKB-KW"/>
</dbReference>
<dbReference type="GO" id="GO:0032259">
    <property type="term" value="P:methylation"/>
    <property type="evidence" value="ECO:0007669"/>
    <property type="project" value="UniProtKB-KW"/>
</dbReference>
<dbReference type="FunFam" id="3.40.50.150:FF:000342">
    <property type="entry name" value="Probable methyltransferase PMT19"/>
    <property type="match status" value="1"/>
</dbReference>
<dbReference type="FunFam" id="3.40.50.150:FF:000451">
    <property type="entry name" value="Probable methyltransferase PMT19"/>
    <property type="match status" value="1"/>
</dbReference>
<dbReference type="Gene3D" id="3.40.50.150">
    <property type="entry name" value="Vaccinia Virus protein VP39"/>
    <property type="match status" value="2"/>
</dbReference>
<dbReference type="InterPro" id="IPR004159">
    <property type="entry name" value="Put_SAM_MeTrfase"/>
</dbReference>
<dbReference type="InterPro" id="IPR029063">
    <property type="entry name" value="SAM-dependent_MTases_sf"/>
</dbReference>
<dbReference type="PANTHER" id="PTHR10108:SF968">
    <property type="entry name" value="METHYLTRANSFERASE PMT19-RELATED"/>
    <property type="match status" value="1"/>
</dbReference>
<dbReference type="PANTHER" id="PTHR10108">
    <property type="entry name" value="SAM-DEPENDENT METHYLTRANSFERASE"/>
    <property type="match status" value="1"/>
</dbReference>
<dbReference type="Pfam" id="PF03141">
    <property type="entry name" value="Methyltransf_29"/>
    <property type="match status" value="1"/>
</dbReference>
<dbReference type="SUPFAM" id="SSF53335">
    <property type="entry name" value="S-adenosyl-L-methionine-dependent methyltransferases"/>
    <property type="match status" value="2"/>
</dbReference>